<feature type="chain" id="PRO_0000134932" description="Probable molybdenum cofactor guanylyltransferase">
    <location>
        <begin position="1"/>
        <end position="196"/>
    </location>
</feature>
<feature type="binding site" evidence="1">
    <location>
        <begin position="7"/>
        <end position="9"/>
    </location>
    <ligand>
        <name>GTP</name>
        <dbReference type="ChEBI" id="CHEBI:37565"/>
    </ligand>
</feature>
<feature type="binding site" evidence="1">
    <location>
        <position position="19"/>
    </location>
    <ligand>
        <name>GTP</name>
        <dbReference type="ChEBI" id="CHEBI:37565"/>
    </ligand>
</feature>
<feature type="binding site" evidence="1">
    <location>
        <position position="68"/>
    </location>
    <ligand>
        <name>GTP</name>
        <dbReference type="ChEBI" id="CHEBI:37565"/>
    </ligand>
</feature>
<feature type="binding site" evidence="1">
    <location>
        <position position="93"/>
    </location>
    <ligand>
        <name>GTP</name>
        <dbReference type="ChEBI" id="CHEBI:37565"/>
    </ligand>
</feature>
<feature type="binding site" evidence="1">
    <location>
        <position position="93"/>
    </location>
    <ligand>
        <name>Mg(2+)</name>
        <dbReference type="ChEBI" id="CHEBI:18420"/>
    </ligand>
</feature>
<dbReference type="EC" id="2.7.7.77" evidence="1"/>
<dbReference type="EMBL" id="AE009950">
    <property type="protein sequence ID" value="AAL80742.1"/>
    <property type="molecule type" value="Genomic_DNA"/>
</dbReference>
<dbReference type="RefSeq" id="WP_011011738.1">
    <property type="nucleotide sequence ID" value="NZ_CP023154.1"/>
</dbReference>
<dbReference type="SMR" id="Q8U354"/>
<dbReference type="STRING" id="186497.PF0618"/>
<dbReference type="PaxDb" id="186497-PF0618"/>
<dbReference type="GeneID" id="41712423"/>
<dbReference type="KEGG" id="pfu:PF0618"/>
<dbReference type="PATRIC" id="fig|186497.12.peg.649"/>
<dbReference type="eggNOG" id="arCOG01872">
    <property type="taxonomic scope" value="Archaea"/>
</dbReference>
<dbReference type="HOGENOM" id="CLU_055597_2_2_2"/>
<dbReference type="OrthoDB" id="28434at2157"/>
<dbReference type="PhylomeDB" id="Q8U354"/>
<dbReference type="BioCyc" id="MetaCyc:MONOMER-21136"/>
<dbReference type="Proteomes" id="UP000001013">
    <property type="component" value="Chromosome"/>
</dbReference>
<dbReference type="GO" id="GO:0005737">
    <property type="term" value="C:cytoplasm"/>
    <property type="evidence" value="ECO:0007669"/>
    <property type="project" value="UniProtKB-SubCell"/>
</dbReference>
<dbReference type="GO" id="GO:0005525">
    <property type="term" value="F:GTP binding"/>
    <property type="evidence" value="ECO:0007669"/>
    <property type="project" value="UniProtKB-UniRule"/>
</dbReference>
<dbReference type="GO" id="GO:0046872">
    <property type="term" value="F:metal ion binding"/>
    <property type="evidence" value="ECO:0007669"/>
    <property type="project" value="UniProtKB-KW"/>
</dbReference>
<dbReference type="GO" id="GO:0061603">
    <property type="term" value="F:molybdenum cofactor guanylyltransferase activity"/>
    <property type="evidence" value="ECO:0007669"/>
    <property type="project" value="UniProtKB-EC"/>
</dbReference>
<dbReference type="GO" id="GO:0006777">
    <property type="term" value="P:Mo-molybdopterin cofactor biosynthetic process"/>
    <property type="evidence" value="ECO:0007669"/>
    <property type="project" value="UniProtKB-KW"/>
</dbReference>
<dbReference type="CDD" id="cd02503">
    <property type="entry name" value="MobA"/>
    <property type="match status" value="1"/>
</dbReference>
<dbReference type="Gene3D" id="3.90.550.10">
    <property type="entry name" value="Spore Coat Polysaccharide Biosynthesis Protein SpsA, Chain A"/>
    <property type="match status" value="1"/>
</dbReference>
<dbReference type="HAMAP" id="MF_00316">
    <property type="entry name" value="MobA"/>
    <property type="match status" value="1"/>
</dbReference>
<dbReference type="InterPro" id="IPR025877">
    <property type="entry name" value="MobA-like_NTP_Trfase"/>
</dbReference>
<dbReference type="InterPro" id="IPR013482">
    <property type="entry name" value="Molybde_CF_guanTrfase"/>
</dbReference>
<dbReference type="InterPro" id="IPR029044">
    <property type="entry name" value="Nucleotide-diphossugar_trans"/>
</dbReference>
<dbReference type="NCBIfam" id="NF001457">
    <property type="entry name" value="PRK00317.1-3"/>
    <property type="match status" value="1"/>
</dbReference>
<dbReference type="PANTHER" id="PTHR19136">
    <property type="entry name" value="MOLYBDENUM COFACTOR GUANYLYLTRANSFERASE"/>
    <property type="match status" value="1"/>
</dbReference>
<dbReference type="PANTHER" id="PTHR19136:SF81">
    <property type="entry name" value="MOLYBDENUM COFACTOR GUANYLYLTRANSFERASE"/>
    <property type="match status" value="1"/>
</dbReference>
<dbReference type="Pfam" id="PF12804">
    <property type="entry name" value="NTP_transf_3"/>
    <property type="match status" value="1"/>
</dbReference>
<dbReference type="SUPFAM" id="SSF53448">
    <property type="entry name" value="Nucleotide-diphospho-sugar transferases"/>
    <property type="match status" value="1"/>
</dbReference>
<reference key="1">
    <citation type="journal article" date="1999" name="Genetics">
        <title>Divergence of the hyperthermophilic archaea Pyrococcus furiosus and P. horikoshii inferred from complete genomic sequences.</title>
        <authorList>
            <person name="Maeder D.L."/>
            <person name="Weiss R.B."/>
            <person name="Dunn D.M."/>
            <person name="Cherry J.L."/>
            <person name="Gonzalez J.M."/>
            <person name="DiRuggiero J."/>
            <person name="Robb F.T."/>
        </authorList>
    </citation>
    <scope>NUCLEOTIDE SEQUENCE [LARGE SCALE GENOMIC DNA]</scope>
    <source>
        <strain>ATCC 43587 / DSM 3638 / JCM 8422 / Vc1</strain>
    </source>
</reference>
<protein>
    <recommendedName>
        <fullName evidence="1">Probable molybdenum cofactor guanylyltransferase</fullName>
        <shortName evidence="1">MoCo guanylyltransferase</shortName>
        <ecNumber evidence="1">2.7.7.77</ecNumber>
    </recommendedName>
    <alternativeName>
        <fullName evidence="1">GTP:molybdopterin guanylyltransferase</fullName>
    </alternativeName>
    <alternativeName>
        <fullName evidence="1">Mo-MPT guanylyltransferase</fullName>
    </alternativeName>
    <alternativeName>
        <fullName evidence="1">Molybdopterin guanylyltransferase</fullName>
    </alternativeName>
    <alternativeName>
        <fullName evidence="1">Molybdopterin-guanine dinucleotide synthase</fullName>
        <shortName evidence="1">MGD synthase</shortName>
    </alternativeName>
</protein>
<sequence>MVIGAVLAGGISKRFGEDKLTYRVGGKPLILYTIEALESASKIEKIVVIASPFNWQKFRELGLEVIVDALMVGPLGGIYLALSLGDSFVVGGDMPLLVPEFIDYLVAKFEEAKKLACVPRWPNGYLEPLHAVYSRSLREIIEGYIERGEYKVGNVIESSNPCYIPVESLPERWKWAFFNINKKEDLRKLKTFIKEF</sequence>
<evidence type="ECO:0000255" key="1">
    <source>
        <dbReference type="HAMAP-Rule" id="MF_00316"/>
    </source>
</evidence>
<gene>
    <name evidence="1" type="primary">mobA</name>
    <name type="ordered locus">PF0618</name>
</gene>
<proteinExistence type="inferred from homology"/>
<name>MOBA_PYRFU</name>
<organism>
    <name type="scientific">Pyrococcus furiosus (strain ATCC 43587 / DSM 3638 / JCM 8422 / Vc1)</name>
    <dbReference type="NCBI Taxonomy" id="186497"/>
    <lineage>
        <taxon>Archaea</taxon>
        <taxon>Methanobacteriati</taxon>
        <taxon>Methanobacteriota</taxon>
        <taxon>Thermococci</taxon>
        <taxon>Thermococcales</taxon>
        <taxon>Thermococcaceae</taxon>
        <taxon>Pyrococcus</taxon>
    </lineage>
</organism>
<accession>Q8U354</accession>
<comment type="function">
    <text evidence="1">Transfers a GMP moiety from GTP to Mo-molybdopterin (Mo-MPT) cofactor (Moco or molybdenum cofactor) to form Mo-molybdopterin guanine dinucleotide (Mo-MGD) cofactor.</text>
</comment>
<comment type="catalytic activity">
    <reaction evidence="1">
        <text>Mo-molybdopterin + GTP + H(+) = Mo-molybdopterin guanine dinucleotide + diphosphate</text>
        <dbReference type="Rhea" id="RHEA:34243"/>
        <dbReference type="ChEBI" id="CHEBI:15378"/>
        <dbReference type="ChEBI" id="CHEBI:33019"/>
        <dbReference type="ChEBI" id="CHEBI:37565"/>
        <dbReference type="ChEBI" id="CHEBI:71302"/>
        <dbReference type="ChEBI" id="CHEBI:71310"/>
        <dbReference type="EC" id="2.7.7.77"/>
    </reaction>
</comment>
<comment type="cofactor">
    <cofactor evidence="1">
        <name>Mg(2+)</name>
        <dbReference type="ChEBI" id="CHEBI:18420"/>
    </cofactor>
</comment>
<comment type="subcellular location">
    <subcellularLocation>
        <location evidence="1">Cytoplasm</location>
    </subcellularLocation>
</comment>
<comment type="domain">
    <text evidence="1">The N-terminal domain determines nucleotide recognition and specific binding, while the C-terminal domain determines the specific binding to the target protein.</text>
</comment>
<comment type="similarity">
    <text evidence="1">Belongs to the MobA family.</text>
</comment>
<keyword id="KW-0963">Cytoplasm</keyword>
<keyword id="KW-0342">GTP-binding</keyword>
<keyword id="KW-0460">Magnesium</keyword>
<keyword id="KW-0479">Metal-binding</keyword>
<keyword id="KW-0501">Molybdenum cofactor biosynthesis</keyword>
<keyword id="KW-0547">Nucleotide-binding</keyword>
<keyword id="KW-1185">Reference proteome</keyword>
<keyword id="KW-0808">Transferase</keyword>